<proteinExistence type="predicted"/>
<name>YO08_BPHC1</name>
<reference key="1">
    <citation type="journal article" date="1994" name="Mol. Microbiol.">
        <title>Identification of an HP1 phage protein required for site-specific excision.</title>
        <authorList>
            <person name="Esposito D."/>
            <person name="Scocca J.J."/>
        </authorList>
    </citation>
    <scope>NUCLEOTIDE SEQUENCE [GENOMIC DNA]</scope>
</reference>
<reference key="2">
    <citation type="journal article" date="1996" name="Nucleic Acids Res.">
        <title>The complete nucleotide sequence of bacteriophage HP1 DNA.</title>
        <authorList>
            <person name="Esposito D."/>
            <person name="Fitzmaurice W.P."/>
            <person name="Benjamin R.C."/>
            <person name="Goodman S.D."/>
            <person name="Waldman A.S."/>
            <person name="Scocca J.J."/>
        </authorList>
    </citation>
    <scope>NUCLEOTIDE SEQUENCE [LARGE SCALE GENOMIC DNA]</scope>
</reference>
<accession>P69622</accession>
<accession>P51709</accession>
<protein>
    <recommendedName>
        <fullName>Uncharacterized 10.8 kDa protein in cox-rep intergenic region</fullName>
    </recommendedName>
    <alternativeName>
        <fullName>ORF24</fullName>
    </alternativeName>
    <alternativeName>
        <fullName>ORF8</fullName>
    </alternativeName>
</protein>
<organismHost>
    <name type="scientific">Haemophilus influenzae</name>
    <dbReference type="NCBI Taxonomy" id="727"/>
</organismHost>
<dbReference type="EMBL" id="U24159">
    <property type="protein sequence ID" value="AAB09192.1"/>
    <property type="molecule type" value="Genomic_DNA"/>
</dbReference>
<dbReference type="PIR" id="S72339">
    <property type="entry name" value="S72339"/>
</dbReference>
<dbReference type="RefSeq" id="NP_043476.1">
    <property type="nucleotide sequence ID" value="NC_001697.1"/>
</dbReference>
<dbReference type="SMR" id="P69622"/>
<dbReference type="GeneID" id="1261126"/>
<dbReference type="KEGG" id="vg:1261126"/>
<dbReference type="Proteomes" id="UP000001713">
    <property type="component" value="Segment"/>
</dbReference>
<feature type="chain" id="PRO_0000165323" description="Uncharacterized 10.8 kDa protein in cox-rep intergenic region">
    <location>
        <begin position="1"/>
        <end position="93"/>
    </location>
</feature>
<organism>
    <name type="scientific">Haemophilus phage HP1 (strain HP1c1)</name>
    <name type="common">Bacteriophage HP1</name>
    <dbReference type="NCBI Taxonomy" id="1289570"/>
    <lineage>
        <taxon>Viruses</taxon>
        <taxon>Duplodnaviria</taxon>
        <taxon>Heunggongvirae</taxon>
        <taxon>Uroviricota</taxon>
        <taxon>Caudoviricetes</taxon>
        <taxon>Peduoviridae</taxon>
        <taxon>Hpunavirus</taxon>
        <taxon>Haemophilus phage HP1</taxon>
    </lineage>
</organism>
<keyword id="KW-1185">Reference proteome</keyword>
<sequence>MQEHIIDLSERYALKLNENHVYILYKIELNENGTYQRKGGAVCKDLPSLLDKLIYCELMNEKVETLEDMRNVLHAIHSEVTRIAEIQATYAQA</sequence>